<keyword id="KW-1003">Cell membrane</keyword>
<keyword id="KW-0378">Hydrolase</keyword>
<keyword id="KW-0472">Membrane</keyword>
<keyword id="KW-0479">Metal-binding</keyword>
<keyword id="KW-0482">Metalloprotease</keyword>
<keyword id="KW-0645">Protease</keyword>
<keyword id="KW-0812">Transmembrane</keyword>
<keyword id="KW-1133">Transmembrane helix</keyword>
<keyword id="KW-0862">Zinc</keyword>
<evidence type="ECO:0000255" key="1">
    <source>
        <dbReference type="HAMAP-Rule" id="MF_00188"/>
    </source>
</evidence>
<dbReference type="EC" id="3.4.24.-" evidence="1"/>
<dbReference type="EMBL" id="AP007281">
    <property type="protein sequence ID" value="BAG24749.1"/>
    <property type="molecule type" value="Genomic_DNA"/>
</dbReference>
<dbReference type="RefSeq" id="WP_003667235.1">
    <property type="nucleotide sequence ID" value="NC_010609.1"/>
</dbReference>
<dbReference type="SMR" id="B2G5L7"/>
<dbReference type="KEGG" id="lrf:LAR_0233"/>
<dbReference type="HOGENOM" id="CLU_042266_2_1_9"/>
<dbReference type="GO" id="GO:0005886">
    <property type="term" value="C:plasma membrane"/>
    <property type="evidence" value="ECO:0007669"/>
    <property type="project" value="UniProtKB-SubCell"/>
</dbReference>
<dbReference type="GO" id="GO:0004222">
    <property type="term" value="F:metalloendopeptidase activity"/>
    <property type="evidence" value="ECO:0007669"/>
    <property type="project" value="UniProtKB-UniRule"/>
</dbReference>
<dbReference type="GO" id="GO:0008270">
    <property type="term" value="F:zinc ion binding"/>
    <property type="evidence" value="ECO:0007669"/>
    <property type="project" value="UniProtKB-UniRule"/>
</dbReference>
<dbReference type="GO" id="GO:0006508">
    <property type="term" value="P:proteolysis"/>
    <property type="evidence" value="ECO:0007669"/>
    <property type="project" value="UniProtKB-KW"/>
</dbReference>
<dbReference type="CDD" id="cd07340">
    <property type="entry name" value="M48B_Htpx_like"/>
    <property type="match status" value="1"/>
</dbReference>
<dbReference type="Gene3D" id="3.30.2010.10">
    <property type="entry name" value="Metalloproteases ('zincins'), catalytic domain"/>
    <property type="match status" value="1"/>
</dbReference>
<dbReference type="HAMAP" id="MF_00188">
    <property type="entry name" value="Pept_M48_protease_HtpX"/>
    <property type="match status" value="1"/>
</dbReference>
<dbReference type="InterPro" id="IPR050083">
    <property type="entry name" value="HtpX_protease"/>
</dbReference>
<dbReference type="InterPro" id="IPR022919">
    <property type="entry name" value="Pept_M48_protease_HtpX"/>
</dbReference>
<dbReference type="InterPro" id="IPR001915">
    <property type="entry name" value="Peptidase_M48"/>
</dbReference>
<dbReference type="NCBIfam" id="NF003425">
    <property type="entry name" value="PRK04897.1"/>
    <property type="match status" value="1"/>
</dbReference>
<dbReference type="PANTHER" id="PTHR43221">
    <property type="entry name" value="PROTEASE HTPX"/>
    <property type="match status" value="1"/>
</dbReference>
<dbReference type="PANTHER" id="PTHR43221:SF1">
    <property type="entry name" value="PROTEASE HTPX"/>
    <property type="match status" value="1"/>
</dbReference>
<dbReference type="Pfam" id="PF01435">
    <property type="entry name" value="Peptidase_M48"/>
    <property type="match status" value="1"/>
</dbReference>
<reference key="1">
    <citation type="journal article" date="2008" name="DNA Res.">
        <title>Comparative genome analysis of Lactobacillus reuteri and Lactobacillus fermentum reveal a genomic island for reuterin and cobalamin production.</title>
        <authorList>
            <person name="Morita H."/>
            <person name="Toh H."/>
            <person name="Fukuda S."/>
            <person name="Horikawa H."/>
            <person name="Oshima K."/>
            <person name="Suzuki T."/>
            <person name="Murakami M."/>
            <person name="Hisamatsu S."/>
            <person name="Kato Y."/>
            <person name="Takizawa T."/>
            <person name="Fukuoka H."/>
            <person name="Yoshimura T."/>
            <person name="Itoh K."/>
            <person name="O'Sullivan D.J."/>
            <person name="McKay L.L."/>
            <person name="Ohno H."/>
            <person name="Kikuchi J."/>
            <person name="Masaoka T."/>
            <person name="Hattori M."/>
        </authorList>
    </citation>
    <scope>NUCLEOTIDE SEQUENCE [LARGE SCALE GENOMIC DNA]</scope>
    <source>
        <strain>JCM 1112</strain>
    </source>
</reference>
<accession>B2G5L7</accession>
<feature type="chain" id="PRO_1000098824" description="Protease HtpX homolog">
    <location>
        <begin position="1"/>
        <end position="298"/>
    </location>
</feature>
<feature type="transmembrane region" description="Helical" evidence="1">
    <location>
        <begin position="14"/>
        <end position="34"/>
    </location>
</feature>
<feature type="transmembrane region" description="Helical" evidence="1">
    <location>
        <begin position="39"/>
        <end position="59"/>
    </location>
</feature>
<feature type="transmembrane region" description="Helical" evidence="1">
    <location>
        <begin position="159"/>
        <end position="179"/>
    </location>
</feature>
<feature type="transmembrane region" description="Helical" evidence="1">
    <location>
        <begin position="195"/>
        <end position="215"/>
    </location>
</feature>
<feature type="active site" evidence="1">
    <location>
        <position position="145"/>
    </location>
</feature>
<feature type="binding site" evidence="1">
    <location>
        <position position="144"/>
    </location>
    <ligand>
        <name>Zn(2+)</name>
        <dbReference type="ChEBI" id="CHEBI:29105"/>
        <note>catalytic</note>
    </ligand>
</feature>
<feature type="binding site" evidence="1">
    <location>
        <position position="148"/>
    </location>
    <ligand>
        <name>Zn(2+)</name>
        <dbReference type="ChEBI" id="CHEBI:29105"/>
        <note>catalytic</note>
    </ligand>
</feature>
<feature type="binding site" evidence="1">
    <location>
        <position position="224"/>
    </location>
    <ligand>
        <name>Zn(2+)</name>
        <dbReference type="ChEBI" id="CHEBI:29105"/>
        <note>catalytic</note>
    </ligand>
</feature>
<gene>
    <name evidence="1" type="primary">htpX</name>
    <name type="ordered locus">LAR_0233</name>
</gene>
<proteinExistence type="inferred from homology"/>
<organism>
    <name type="scientific">Limosilactobacillus reuteri subsp. reuteri (strain JCM 1112)</name>
    <name type="common">Lactobacillus reuteri</name>
    <dbReference type="NCBI Taxonomy" id="557433"/>
    <lineage>
        <taxon>Bacteria</taxon>
        <taxon>Bacillati</taxon>
        <taxon>Bacillota</taxon>
        <taxon>Bacilli</taxon>
        <taxon>Lactobacillales</taxon>
        <taxon>Lactobacillaceae</taxon>
        <taxon>Limosilactobacillus</taxon>
    </lineage>
</organism>
<comment type="cofactor">
    <cofactor evidence="1">
        <name>Zn(2+)</name>
        <dbReference type="ChEBI" id="CHEBI:29105"/>
    </cofactor>
    <text evidence="1">Binds 1 zinc ion per subunit.</text>
</comment>
<comment type="subcellular location">
    <subcellularLocation>
        <location evidence="1">Cell membrane</location>
        <topology evidence="1">Multi-pass membrane protein</topology>
    </subcellularLocation>
</comment>
<comment type="similarity">
    <text evidence="1">Belongs to the peptidase M48B family.</text>
</comment>
<name>HTPX_LIMRJ</name>
<sequence>MLYQQIARNKRKTILVMFGFFVLLALIGAAIGYLFARTVIGGMIIAAIIAVIYMSVIIGQSTDVVMRMNNATEVRSASDAPELWHIVEDMALVARVPMPKVYIIHDPSPNAFATGNDPEHAAVAATTGLMEKMNREELEGVMAHEMTHVRNYDIRLQTIALALASAIAMLVNFAGNFWWIGGRSSSDDRDNPSSIFAILGSILLIILAPLAATIAQMALSRNREYLADAGAVELTRNPQGMISALEKLKTAVPMKHVDPSSSALYISDPEKNAKHHPFSNLFDTHPPLDKRIERLRQM</sequence>
<protein>
    <recommendedName>
        <fullName evidence="1">Protease HtpX homolog</fullName>
        <ecNumber evidence="1">3.4.24.-</ecNumber>
    </recommendedName>
</protein>